<keyword id="KW-0067">ATP-binding</keyword>
<keyword id="KW-0131">Cell cycle</keyword>
<keyword id="KW-0132">Cell division</keyword>
<keyword id="KW-0963">Cytoplasm</keyword>
<keyword id="KW-0206">Cytoskeleton</keyword>
<keyword id="KW-0418">Kinase</keyword>
<keyword id="KW-0498">Mitosis</keyword>
<keyword id="KW-0547">Nucleotide-binding</keyword>
<keyword id="KW-0539">Nucleus</keyword>
<keyword id="KW-0597">Phosphoprotein</keyword>
<keyword id="KW-1185">Reference proteome</keyword>
<keyword id="KW-0677">Repeat</keyword>
<keyword id="KW-0723">Serine/threonine-protein kinase</keyword>
<keyword id="KW-0808">Transferase</keyword>
<keyword id="KW-0832">Ubl conjugation</keyword>
<sequence>MAQVAGKKLTVAPEAAKPPGIPGSSSAVKEIPEILVDPRTRRRYLRGRFLGKGGFAKCYEITDLESREVFAGKIVPKTMLLKPHQKDKMTMEIAIQRSLDHRHVVGFHGFFEDNDFVYVVLELCRRRSLLELHKRRKAVTEPEARYYLKQTISGCQYLHSNRVIHRDLKLGNLFLNDEMEVKIGDFGLATKVEYDGERKKTLCGTPNYIAPEVLGKKGHSFEVDIWSIGCIMYTLLVGKPPFETSCLKETYMRIKKNEYSIPKHINPVAAALIQKMLRSDPTSRPTIDDLLNDEFFTSGYIPSRLPTTCLTVPPRFSIAPSTIDQSLRKPLTAINKGQDSPLVEKQVAPAKEEEMQQPEFTEPADCYLSEMLQQLTCLNAVKPSERALIRQEEAEDPASIPIFWISKWVDYSDKYGLGYQLCDNSVGVLFNDSTRLIMYNDGDSLQYIERNNTESYLNVRSYPTTLTKKITLLKYFRNYMSEHLLKAGANTTPREGDELARLPFLRTWFRTRSAIILHLSNGTVQINFFQDHTKIILCPLMAAVSYIDEKREFRTYKLSLIQEFGCCKELASRLRYARTMVEKLQSSKSAVAHVKASA</sequence>
<protein>
    <recommendedName>
        <fullName>Serine/threonine-protein kinase PLK1</fullName>
        <ecNumber>2.7.11.21</ecNumber>
    </recommendedName>
    <alternativeName>
        <fullName>Plx1</fullName>
    </alternativeName>
    <alternativeName>
        <fullName>Polo-like kinase 1</fullName>
        <shortName>PLK-1</shortName>
    </alternativeName>
</protein>
<proteinExistence type="evidence at protein level"/>
<evidence type="ECO:0000250" key="1"/>
<evidence type="ECO:0000250" key="2">
    <source>
        <dbReference type="UniProtKB" id="P53350"/>
    </source>
</evidence>
<evidence type="ECO:0000255" key="3">
    <source>
        <dbReference type="PROSITE-ProRule" id="PRU00154"/>
    </source>
</evidence>
<evidence type="ECO:0000255" key="4">
    <source>
        <dbReference type="PROSITE-ProRule" id="PRU00159"/>
    </source>
</evidence>
<evidence type="ECO:0000255" key="5">
    <source>
        <dbReference type="PROSITE-ProRule" id="PRU10027"/>
    </source>
</evidence>
<evidence type="ECO:0000256" key="6">
    <source>
        <dbReference type="SAM" id="MobiDB-lite"/>
    </source>
</evidence>
<evidence type="ECO:0000269" key="7">
    <source>
    </source>
</evidence>
<evidence type="ECO:0000269" key="8">
    <source>
    </source>
</evidence>
<evidence type="ECO:0000269" key="9">
    <source>
    </source>
</evidence>
<evidence type="ECO:0000269" key="10">
    <source>
    </source>
</evidence>
<evidence type="ECO:0000269" key="11">
    <source>
    </source>
</evidence>
<evidence type="ECO:0000269" key="12">
    <source>
    </source>
</evidence>
<evidence type="ECO:0000269" key="13">
    <source>
    </source>
</evidence>
<evidence type="ECO:0000269" key="14">
    <source>
    </source>
</evidence>
<evidence type="ECO:0000269" key="15">
    <source>
    </source>
</evidence>
<evidence type="ECO:0000269" key="16">
    <source>
    </source>
</evidence>
<evidence type="ECO:0000305" key="17"/>
<evidence type="ECO:0000305" key="18">
    <source>
    </source>
</evidence>
<name>PLK1_XENLA</name>
<dbReference type="EC" id="2.7.11.21"/>
<dbReference type="EMBL" id="U58205">
    <property type="protein sequence ID" value="AAC60017.1"/>
    <property type="molecule type" value="mRNA"/>
</dbReference>
<dbReference type="EMBL" id="BC046839">
    <property type="protein sequence ID" value="AAH46839.1"/>
    <property type="molecule type" value="mRNA"/>
</dbReference>
<dbReference type="RefSeq" id="NP_001080788.1">
    <property type="nucleotide sequence ID" value="NM_001087319.1"/>
</dbReference>
<dbReference type="SMR" id="P70032"/>
<dbReference type="BioGRID" id="98723">
    <property type="interactions" value="13"/>
</dbReference>
<dbReference type="DIP" id="DIP-42603N"/>
<dbReference type="IntAct" id="P70032">
    <property type="interactions" value="11"/>
</dbReference>
<dbReference type="MINT" id="P70032"/>
<dbReference type="BindingDB" id="P70032"/>
<dbReference type="ChEMBL" id="CHEMBL4519"/>
<dbReference type="iPTMnet" id="P70032"/>
<dbReference type="DNASU" id="380481"/>
<dbReference type="GeneID" id="380481"/>
<dbReference type="KEGG" id="xla:380481"/>
<dbReference type="AGR" id="Xenbase:XB-GENE-941545"/>
<dbReference type="CTD" id="380481"/>
<dbReference type="Xenbase" id="XB-GENE-941545">
    <property type="gene designation" value="plk1.S"/>
</dbReference>
<dbReference type="OrthoDB" id="408964at2759"/>
<dbReference type="PRO" id="PR:P70032"/>
<dbReference type="Proteomes" id="UP000186698">
    <property type="component" value="Chromosome 9_10S"/>
</dbReference>
<dbReference type="Bgee" id="380481">
    <property type="expression patterns" value="Expressed in egg cell and 16 other cell types or tissues"/>
</dbReference>
<dbReference type="GO" id="GO:0005813">
    <property type="term" value="C:centrosome"/>
    <property type="evidence" value="ECO:0000250"/>
    <property type="project" value="UniProtKB"/>
</dbReference>
<dbReference type="GO" id="GO:0005737">
    <property type="term" value="C:cytoplasm"/>
    <property type="evidence" value="ECO:0000318"/>
    <property type="project" value="GO_Central"/>
</dbReference>
<dbReference type="GO" id="GO:0000776">
    <property type="term" value="C:kinetochore"/>
    <property type="evidence" value="ECO:0000250"/>
    <property type="project" value="UniProtKB"/>
</dbReference>
<dbReference type="GO" id="GO:0030496">
    <property type="term" value="C:midbody"/>
    <property type="evidence" value="ECO:0000250"/>
    <property type="project" value="UniProtKB"/>
</dbReference>
<dbReference type="GO" id="GO:0005634">
    <property type="term" value="C:nucleus"/>
    <property type="evidence" value="ECO:0000250"/>
    <property type="project" value="UniProtKB"/>
</dbReference>
<dbReference type="GO" id="GO:0005819">
    <property type="term" value="C:spindle"/>
    <property type="evidence" value="ECO:0000250"/>
    <property type="project" value="UniProtKB"/>
</dbReference>
<dbReference type="GO" id="GO:0051233">
    <property type="term" value="C:spindle midzone"/>
    <property type="evidence" value="ECO:0000250"/>
    <property type="project" value="UniProtKB"/>
</dbReference>
<dbReference type="GO" id="GO:0000922">
    <property type="term" value="C:spindle pole"/>
    <property type="evidence" value="ECO:0000318"/>
    <property type="project" value="GO_Central"/>
</dbReference>
<dbReference type="GO" id="GO:0005524">
    <property type="term" value="F:ATP binding"/>
    <property type="evidence" value="ECO:0007669"/>
    <property type="project" value="UniProtKB-KW"/>
</dbReference>
<dbReference type="GO" id="GO:0008017">
    <property type="term" value="F:microtubule binding"/>
    <property type="evidence" value="ECO:0000250"/>
    <property type="project" value="UniProtKB"/>
</dbReference>
<dbReference type="GO" id="GO:0019901">
    <property type="term" value="F:protein kinase binding"/>
    <property type="evidence" value="ECO:0000353"/>
    <property type="project" value="UniProtKB"/>
</dbReference>
<dbReference type="GO" id="GO:0106310">
    <property type="term" value="F:protein serine kinase activity"/>
    <property type="evidence" value="ECO:0007669"/>
    <property type="project" value="RHEA"/>
</dbReference>
<dbReference type="GO" id="GO:0004674">
    <property type="term" value="F:protein serine/threonine kinase activity"/>
    <property type="evidence" value="ECO:0000314"/>
    <property type="project" value="UniProtKB"/>
</dbReference>
<dbReference type="GO" id="GO:0007098">
    <property type="term" value="P:centrosome cycle"/>
    <property type="evidence" value="ECO:0000250"/>
    <property type="project" value="UniProtKB"/>
</dbReference>
<dbReference type="GO" id="GO:0000086">
    <property type="term" value="P:G2/M transition of mitotic cell cycle"/>
    <property type="evidence" value="ECO:0000250"/>
    <property type="project" value="UniProtKB"/>
</dbReference>
<dbReference type="GO" id="GO:0001578">
    <property type="term" value="P:microtubule bundle formation"/>
    <property type="evidence" value="ECO:0000250"/>
    <property type="project" value="UniProtKB"/>
</dbReference>
<dbReference type="GO" id="GO:0000278">
    <property type="term" value="P:mitotic cell cycle"/>
    <property type="evidence" value="ECO:0000250"/>
    <property type="project" value="UniProtKB"/>
</dbReference>
<dbReference type="GO" id="GO:0000281">
    <property type="term" value="P:mitotic cytokinesis"/>
    <property type="evidence" value="ECO:0000250"/>
    <property type="project" value="UniProtKB"/>
</dbReference>
<dbReference type="GO" id="GO:0007095">
    <property type="term" value="P:mitotic G2 DNA damage checkpoint signaling"/>
    <property type="evidence" value="ECO:0000250"/>
    <property type="project" value="UniProtKB"/>
</dbReference>
<dbReference type="GO" id="GO:0007052">
    <property type="term" value="P:mitotic spindle organization"/>
    <property type="evidence" value="ECO:0000318"/>
    <property type="project" value="GO_Central"/>
</dbReference>
<dbReference type="GO" id="GO:0043066">
    <property type="term" value="P:negative regulation of apoptotic process"/>
    <property type="evidence" value="ECO:0000250"/>
    <property type="project" value="UniProtKB"/>
</dbReference>
<dbReference type="GO" id="GO:2000042">
    <property type="term" value="P:negative regulation of double-strand break repair via homologous recombination"/>
    <property type="evidence" value="ECO:0000250"/>
    <property type="project" value="UniProtKB"/>
</dbReference>
<dbReference type="GO" id="GO:0000122">
    <property type="term" value="P:negative regulation of transcription by RNA polymerase II"/>
    <property type="evidence" value="ECO:0000250"/>
    <property type="project" value="UniProtKB"/>
</dbReference>
<dbReference type="GO" id="GO:0001556">
    <property type="term" value="P:oocyte maturation"/>
    <property type="evidence" value="ECO:0000314"/>
    <property type="project" value="UniProtKB"/>
</dbReference>
<dbReference type="GO" id="GO:1904668">
    <property type="term" value="P:positive regulation of ubiquitin protein ligase activity"/>
    <property type="evidence" value="ECO:0000250"/>
    <property type="project" value="UniProtKB"/>
</dbReference>
<dbReference type="GO" id="GO:0071168">
    <property type="term" value="P:protein localization to chromatin"/>
    <property type="evidence" value="ECO:0000250"/>
    <property type="project" value="UniProtKB"/>
</dbReference>
<dbReference type="GO" id="GO:0006468">
    <property type="term" value="P:protein phosphorylation"/>
    <property type="evidence" value="ECO:0000250"/>
    <property type="project" value="UniProtKB"/>
</dbReference>
<dbReference type="CDD" id="cd13118">
    <property type="entry name" value="POLO_box_1"/>
    <property type="match status" value="1"/>
</dbReference>
<dbReference type="CDD" id="cd13117">
    <property type="entry name" value="POLO_box_2"/>
    <property type="match status" value="1"/>
</dbReference>
<dbReference type="CDD" id="cd14187">
    <property type="entry name" value="STKc_PLK1"/>
    <property type="match status" value="1"/>
</dbReference>
<dbReference type="FunFam" id="1.10.510.10:FF:000727">
    <property type="entry name" value="Serine/threonine-protein kinase PLK"/>
    <property type="match status" value="1"/>
</dbReference>
<dbReference type="FunFam" id="3.30.1120.30:FF:000003">
    <property type="entry name" value="Serine/threonine-protein kinase PLK"/>
    <property type="match status" value="1"/>
</dbReference>
<dbReference type="FunFam" id="3.30.200.20:FF:000284">
    <property type="entry name" value="Serine/threonine-protein kinase PLK"/>
    <property type="match status" value="1"/>
</dbReference>
<dbReference type="Gene3D" id="3.30.200.20">
    <property type="entry name" value="Phosphorylase Kinase, domain 1"/>
    <property type="match status" value="1"/>
</dbReference>
<dbReference type="Gene3D" id="3.30.1120.30">
    <property type="entry name" value="POLO box domain"/>
    <property type="match status" value="2"/>
</dbReference>
<dbReference type="Gene3D" id="1.10.510.10">
    <property type="entry name" value="Transferase(Phosphotransferase) domain 1"/>
    <property type="match status" value="1"/>
</dbReference>
<dbReference type="InterPro" id="IPR011009">
    <property type="entry name" value="Kinase-like_dom_sf"/>
</dbReference>
<dbReference type="InterPro" id="IPR033702">
    <property type="entry name" value="PLK1_cat"/>
</dbReference>
<dbReference type="InterPro" id="IPR033701">
    <property type="entry name" value="POLO_box_1"/>
</dbReference>
<dbReference type="InterPro" id="IPR033695">
    <property type="entry name" value="POLO_box_2"/>
</dbReference>
<dbReference type="InterPro" id="IPR000959">
    <property type="entry name" value="POLO_box_dom"/>
</dbReference>
<dbReference type="InterPro" id="IPR036947">
    <property type="entry name" value="POLO_box_dom_sf"/>
</dbReference>
<dbReference type="InterPro" id="IPR000719">
    <property type="entry name" value="Prot_kinase_dom"/>
</dbReference>
<dbReference type="InterPro" id="IPR017441">
    <property type="entry name" value="Protein_kinase_ATP_BS"/>
</dbReference>
<dbReference type="InterPro" id="IPR008271">
    <property type="entry name" value="Ser/Thr_kinase_AS"/>
</dbReference>
<dbReference type="PANTHER" id="PTHR24345">
    <property type="entry name" value="SERINE/THREONINE-PROTEIN KINASE PLK"/>
    <property type="match status" value="1"/>
</dbReference>
<dbReference type="PANTHER" id="PTHR24345:SF93">
    <property type="entry name" value="SERINE_THREONINE-PROTEIN KINASE PLK1"/>
    <property type="match status" value="1"/>
</dbReference>
<dbReference type="Pfam" id="PF00069">
    <property type="entry name" value="Pkinase"/>
    <property type="match status" value="1"/>
</dbReference>
<dbReference type="Pfam" id="PF00659">
    <property type="entry name" value="POLO_box"/>
    <property type="match status" value="2"/>
</dbReference>
<dbReference type="SMART" id="SM00220">
    <property type="entry name" value="S_TKc"/>
    <property type="match status" value="1"/>
</dbReference>
<dbReference type="SUPFAM" id="SSF82615">
    <property type="entry name" value="Polo-box domain"/>
    <property type="match status" value="2"/>
</dbReference>
<dbReference type="SUPFAM" id="SSF56112">
    <property type="entry name" value="Protein kinase-like (PK-like)"/>
    <property type="match status" value="1"/>
</dbReference>
<dbReference type="PROSITE" id="PS50078">
    <property type="entry name" value="POLO_BOX"/>
    <property type="match status" value="2"/>
</dbReference>
<dbReference type="PROSITE" id="PS00107">
    <property type="entry name" value="PROTEIN_KINASE_ATP"/>
    <property type="match status" value="1"/>
</dbReference>
<dbReference type="PROSITE" id="PS50011">
    <property type="entry name" value="PROTEIN_KINASE_DOM"/>
    <property type="match status" value="1"/>
</dbReference>
<dbReference type="PROSITE" id="PS00108">
    <property type="entry name" value="PROTEIN_KINASE_ST"/>
    <property type="match status" value="1"/>
</dbReference>
<reference key="1">
    <citation type="journal article" date="1996" name="Science">
        <title>Purification and molecular cloning of Plx1, a Cdc25-regulatory kinase from Xenopus egg extracts.</title>
        <authorList>
            <person name="Kumagai A."/>
            <person name="Dunphy W.G."/>
        </authorList>
    </citation>
    <scope>NUCLEOTIDE SEQUENCE [MRNA]</scope>
    <scope>FUNCTION</scope>
    <source>
        <tissue>Oocyte</tissue>
    </source>
</reference>
<reference key="2">
    <citation type="submission" date="2003-02" db="EMBL/GenBank/DDBJ databases">
        <authorList>
            <consortium name="NIH - Xenopus Gene Collection (XGC) project"/>
        </authorList>
    </citation>
    <scope>NUCLEOTIDE SEQUENCE [LARGE SCALE MRNA]</scope>
    <source>
        <tissue>Embryo</tissue>
    </source>
</reference>
<reference key="3">
    <citation type="journal article" date="1998" name="Science">
        <title>Purification and cloning of a protein kinase that phosphorylates and activates the polo-like kinase Plx1.</title>
        <authorList>
            <person name="Qian Y.W."/>
            <person name="Erikson E."/>
            <person name="Maller J.L."/>
        </authorList>
    </citation>
    <scope>PHOSPHORYLATION BY STK10</scope>
    <scope>FUNCTION</scope>
    <scope>MUTAGENESIS OF ASN-172</scope>
</reference>
<reference key="4">
    <citation type="journal article" date="1999" name="Mol. Cell. Biol.">
        <title>Mitotic effects of a constitutively active mutant of the Xenopus polo-like kinase Plx1.</title>
        <authorList>
            <person name="Qian Y.W."/>
            <person name="Erikson E."/>
            <person name="Maller J.L."/>
        </authorList>
    </citation>
    <scope>FUNCTION</scope>
    <scope>PHOSPHORYLATION AT THR-201</scope>
    <scope>ACTIVITY REGULATION</scope>
    <scope>SUBCELLULAR LOCATION</scope>
    <scope>MUTAGENESIS OF SER-128; THR-140; THR-201; THR-205 AND SER-227</scope>
</reference>
<reference key="5">
    <citation type="journal article" date="2002" name="J. Biol. Chem.">
        <title>Cell cycle-regulated phosphorylation of the Xenopus polo-like kinase Plx1.</title>
        <authorList>
            <person name="Kelm O."/>
            <person name="Wind M."/>
            <person name="Lehmann W.D."/>
            <person name="Nigg E.A."/>
        </authorList>
    </citation>
    <scope>FUNCTION</scope>
    <scope>PHOSPHORYLATION AT THR-10; SER-25; SER-26; THR-201; SER-260; SER-326 AND SER-340</scope>
    <scope>IDENTIFICATION BY MASS SPECTROMETRY</scope>
    <scope>MUTAGENESIS OF SER-128; ASN-172; THR-201 AND SER-340</scope>
</reference>
<reference key="6">
    <citation type="journal article" date="2002" name="Mol. Cell">
        <title>The dissociation of cohesin from chromosomes in prophase is regulated by Polo-like kinase.</title>
        <authorList>
            <person name="Sumara I."/>
            <person name="Vorlaufer E."/>
            <person name="Stukenberg P.T."/>
            <person name="Kelm O."/>
            <person name="Redemann N."/>
            <person name="Nigg E.A."/>
            <person name="Peters J.-M."/>
        </authorList>
    </citation>
    <scope>FUNCTION IN PHOSPHORYLATION OF STAG2</scope>
</reference>
<reference key="7">
    <citation type="journal article" date="2005" name="Curr. Biol.">
        <title>Polo-like kinase 1 creates the tension-sensing 3F3/2 phosphoepitope and modulates the association of spindle-checkpoint proteins at kinetochores.</title>
        <authorList>
            <person name="Ahonen L.J."/>
            <person name="Kallio M.J."/>
            <person name="Daum J.R."/>
            <person name="Bolton M."/>
            <person name="Manke I.A."/>
            <person name="Yaffe M.B."/>
            <person name="Stukenberg P.T."/>
            <person name="Gorbsky G.J."/>
        </authorList>
    </citation>
    <scope>FUNCTION</scope>
</reference>
<reference key="8">
    <citation type="journal article" date="2005" name="EMBO J.">
        <title>The Polo-like kinase Plx1 interacts with and inhibits Myt1 after fertilization of Xenopus eggs.</title>
        <authorList>
            <person name="Inoue D."/>
            <person name="Sagata N."/>
        </authorList>
    </citation>
    <scope>FUNCTION IN PHOSPHORYLATION OF PKMYT1</scope>
</reference>
<reference key="9">
    <citation type="journal article" date="2007" name="EMBO Rep.">
        <title>Pin1 stabilizes Emi1 during G2 phase by preventing its association with SCF(betatrcp).</title>
        <authorList>
            <person name="Bernis C."/>
            <person name="Vigneron S."/>
            <person name="Burgess A."/>
            <person name="Labbe J.C."/>
            <person name="Fesquet D."/>
            <person name="Castro A."/>
            <person name="Lorca T."/>
        </authorList>
    </citation>
    <scope>INTERACTION WITH FBXO5</scope>
</reference>
<reference key="10">
    <citation type="journal article" date="2009" name="Cell Cycle">
        <title>Phosphorylation of TPX2 by Plx1 enhances activation of Aurora A.</title>
        <authorList>
            <person name="Eckerdt F."/>
            <person name="Pascreau G."/>
            <person name="Phistry M."/>
            <person name="Lewellyn A.L."/>
            <person name="DePaoli-Roach A.A."/>
            <person name="Maller J.L."/>
        </authorList>
    </citation>
    <scope>INTERACTION WITH TPX2</scope>
    <scope>FUNCTION</scope>
</reference>
<reference key="11">
    <citation type="journal article" date="2009" name="J. Cell Sci.">
        <title>Plk1 and Aurora A regulate the depolymerase activity and the cellular localization of Kif2a.</title>
        <authorList>
            <person name="Jang C.Y."/>
            <person name="Coppinger J.A."/>
            <person name="Seki A."/>
            <person name="Yates J.R. III"/>
            <person name="Fang G."/>
        </authorList>
    </citation>
    <scope>FUNCTION</scope>
    <scope>INTERACTION WITH KIF2A</scope>
</reference>
<gene>
    <name type="primary">plk1</name>
    <name type="synonym">plx1</name>
</gene>
<feature type="chain" id="PRO_0000086559" description="Serine/threonine-protein kinase PLK1">
    <location>
        <begin position="1"/>
        <end position="598"/>
    </location>
</feature>
<feature type="domain" description="Protein kinase" evidence="4">
    <location>
        <begin position="44"/>
        <end position="296"/>
    </location>
</feature>
<feature type="domain" description="POLO box 1" evidence="3">
    <location>
        <begin position="404"/>
        <end position="482"/>
    </location>
</feature>
<feature type="domain" description="POLO box 2" evidence="3">
    <location>
        <begin position="504"/>
        <end position="586"/>
    </location>
</feature>
<feature type="region of interest" description="Disordered" evidence="6">
    <location>
        <begin position="1"/>
        <end position="23"/>
    </location>
</feature>
<feature type="region of interest" description="Activation loop" evidence="1">
    <location>
        <begin position="185"/>
        <end position="212"/>
    </location>
</feature>
<feature type="region of interest" description="Linker" evidence="1">
    <location>
        <begin position="487"/>
        <end position="501"/>
    </location>
</feature>
<feature type="region of interest" description="Important for interaction with phosphorylated proteins" evidence="1">
    <location>
        <begin position="532"/>
        <end position="534"/>
    </location>
</feature>
<feature type="short sequence motif" description="D-box that targets the protein for proteasomal degradation in anaphase" evidence="1">
    <location>
        <begin position="328"/>
        <end position="331"/>
    </location>
</feature>
<feature type="active site" description="Proton acceptor" evidence="4 5">
    <location>
        <position position="167"/>
    </location>
</feature>
<feature type="binding site" evidence="4">
    <location>
        <begin position="50"/>
        <end position="58"/>
    </location>
    <ligand>
        <name>ATP</name>
        <dbReference type="ChEBI" id="CHEBI:30616"/>
    </ligand>
</feature>
<feature type="binding site" evidence="4">
    <location>
        <position position="73"/>
    </location>
    <ligand>
        <name>ATP</name>
        <dbReference type="ChEBI" id="CHEBI:30616"/>
    </ligand>
</feature>
<feature type="binding site" evidence="4">
    <location>
        <position position="122"/>
    </location>
    <ligand>
        <name>ATP</name>
        <dbReference type="ChEBI" id="CHEBI:30616"/>
    </ligand>
</feature>
<feature type="binding site" evidence="4">
    <location>
        <begin position="169"/>
        <end position="172"/>
    </location>
    <ligand>
        <name>ATP</name>
        <dbReference type="ChEBI" id="CHEBI:30616"/>
    </ligand>
</feature>
<feature type="binding site" evidence="4">
    <location>
        <position position="185"/>
    </location>
    <ligand>
        <name>ATP</name>
        <dbReference type="ChEBI" id="CHEBI:30616"/>
    </ligand>
</feature>
<feature type="modified residue" description="Phosphothreonine; by PKA; in vitro" evidence="9">
    <location>
        <position position="10"/>
    </location>
</feature>
<feature type="modified residue" description="Phosphoserine" evidence="18">
    <location>
        <position position="25"/>
    </location>
</feature>
<feature type="modified residue" description="Phosphoserine" evidence="18">
    <location>
        <position position="26"/>
    </location>
</feature>
<feature type="modified residue" description="Phosphothreonine; by PKA" evidence="7 9">
    <location>
        <position position="201"/>
    </location>
</feature>
<feature type="modified residue" description="Phosphoserine; by autocatalysis" evidence="9">
    <location>
        <position position="260"/>
    </location>
</feature>
<feature type="modified residue" description="Phosphoserine; by autocatalysis" evidence="9">
    <location>
        <position position="326"/>
    </location>
</feature>
<feature type="modified residue" description="Phosphoserine; by CDK1" evidence="9">
    <location>
        <position position="340"/>
    </location>
</feature>
<feature type="mutagenesis site" description="No effect on activity." evidence="7 9">
    <original>S</original>
    <variation>A</variation>
    <location>
        <position position="128"/>
    </location>
</feature>
<feature type="mutagenesis site" description="Increases activity." evidence="7 9">
    <original>S</original>
    <variation>D</variation>
    <location>
        <position position="128"/>
    </location>
</feature>
<feature type="mutagenesis site" description="No effect on activity." evidence="7">
    <original>T</original>
    <variation>D</variation>
    <location>
        <position position="140"/>
    </location>
</feature>
<feature type="mutagenesis site" description="Abolishes activity." evidence="9 16">
    <original>N</original>
    <variation>A</variation>
    <location>
        <position position="172"/>
    </location>
</feature>
<feature type="mutagenesis site" description="Abolishes activity." evidence="7 9">
    <original>T</original>
    <variation>A</variation>
    <location>
        <position position="201"/>
    </location>
</feature>
<feature type="mutagenesis site" description="Increases activity." evidence="7 9">
    <original>T</original>
    <variation>D</variation>
    <location>
        <position position="201"/>
    </location>
</feature>
<feature type="mutagenesis site" description="Abolishes activity." evidence="7 9">
    <original>T</original>
    <variation>V</variation>
    <location>
        <position position="201"/>
    </location>
</feature>
<feature type="mutagenesis site" description="No effect on activity." evidence="7">
    <original>T</original>
    <variation>D</variation>
    <location>
        <position position="205"/>
    </location>
</feature>
<feature type="mutagenesis site" description="No effect on activity." evidence="7">
    <original>S</original>
    <variation>D</variation>
    <location>
        <position position="227"/>
    </location>
</feature>
<feature type="mutagenesis site" description="No effect on activity." evidence="9">
    <original>S</original>
    <variation>A</variation>
    <location>
        <position position="340"/>
    </location>
</feature>
<feature type="mutagenesis site" description="No effect on activity." evidence="9">
    <original>S</original>
    <variation>D</variation>
    <location>
        <position position="340"/>
    </location>
</feature>
<feature type="sequence conflict" description="In Ref. 2; AAH46839." evidence="17" ref="2">
    <original>A</original>
    <variation>V</variation>
    <location>
        <position position="348"/>
    </location>
</feature>
<organism>
    <name type="scientific">Xenopus laevis</name>
    <name type="common">African clawed frog</name>
    <dbReference type="NCBI Taxonomy" id="8355"/>
    <lineage>
        <taxon>Eukaryota</taxon>
        <taxon>Metazoa</taxon>
        <taxon>Chordata</taxon>
        <taxon>Craniata</taxon>
        <taxon>Vertebrata</taxon>
        <taxon>Euteleostomi</taxon>
        <taxon>Amphibia</taxon>
        <taxon>Batrachia</taxon>
        <taxon>Anura</taxon>
        <taxon>Pipoidea</taxon>
        <taxon>Pipidae</taxon>
        <taxon>Xenopodinae</taxon>
        <taxon>Xenopus</taxon>
        <taxon>Xenopus</taxon>
    </lineage>
</organism>
<accession>P70032</accession>
<accession>Q7ZWQ6</accession>
<comment type="function">
    <text evidence="7 8 9 10 11 13 14 15 16">Serine/threonine-protein kinase that performs several important functions throughout M phase of the cell cycle, including the regulation of centrosome maturation and spindle assembly, the removal of cohesins from chromosome arms, the inactivation of anaphase-promoting complex/cyclosome (APC/C) inhibitors, and the regulation of mitotic exit and cytokinesis. Polo-like kinase proteins act by binding and phosphorylating proteins that are already phosphorylated on a specific motif recognized by the POLO box domains. Phosphorylates cdc25, pkmyt1/myt1, stag2/sa2, tpx2. Plays multiple essential roles during mitosis. Phosphorylates the N-terminal domain of cdc25, which leads to cyclin b-cdc2 activation and mitotic entry. Also required for organization of bipolar spindles, and for exit from mitosis. Involved in kinetochore functions and sister chromatid cohesion by phosphorylating stag2/sa2.</text>
</comment>
<comment type="catalytic activity">
    <reaction>
        <text>L-seryl-[protein] + ATP = O-phospho-L-seryl-[protein] + ADP + H(+)</text>
        <dbReference type="Rhea" id="RHEA:17989"/>
        <dbReference type="Rhea" id="RHEA-COMP:9863"/>
        <dbReference type="Rhea" id="RHEA-COMP:11604"/>
        <dbReference type="ChEBI" id="CHEBI:15378"/>
        <dbReference type="ChEBI" id="CHEBI:29999"/>
        <dbReference type="ChEBI" id="CHEBI:30616"/>
        <dbReference type="ChEBI" id="CHEBI:83421"/>
        <dbReference type="ChEBI" id="CHEBI:456216"/>
        <dbReference type="EC" id="2.7.11.21"/>
    </reaction>
</comment>
<comment type="catalytic activity">
    <reaction>
        <text>L-threonyl-[protein] + ATP = O-phospho-L-threonyl-[protein] + ADP + H(+)</text>
        <dbReference type="Rhea" id="RHEA:46608"/>
        <dbReference type="Rhea" id="RHEA-COMP:11060"/>
        <dbReference type="Rhea" id="RHEA-COMP:11605"/>
        <dbReference type="ChEBI" id="CHEBI:15378"/>
        <dbReference type="ChEBI" id="CHEBI:30013"/>
        <dbReference type="ChEBI" id="CHEBI:30616"/>
        <dbReference type="ChEBI" id="CHEBI:61977"/>
        <dbReference type="ChEBI" id="CHEBI:456216"/>
        <dbReference type="EC" id="2.7.11.21"/>
    </reaction>
</comment>
<comment type="activity regulation">
    <text evidence="7">Activated by phosphorylation of Thr-201.</text>
</comment>
<comment type="subunit">
    <text evidence="12 13 14">Interacts with plk1 and kif2a. Interacts with fbxo5 (PubMed:17159919).</text>
</comment>
<comment type="interaction">
    <interactant intactId="EBI-3511304">
        <id>P70032</id>
    </interactant>
    <interactant intactId="EBI-7161111">
        <id>Q90Z80</id>
        <label>fbxo5-a</label>
    </interactant>
    <organismsDiffer>false</organismsDiffer>
    <experiments>2</experiments>
</comment>
<comment type="interaction">
    <interactant intactId="EBI-3511304">
        <id>P70032</id>
    </interactant>
    <interactant intactId="EBI-876852">
        <id>Q91876</id>
        <label>mcm7-a</label>
    </interactant>
    <organismsDiffer>false</organismsDiffer>
    <experiments>3</experiments>
</comment>
<comment type="subcellular location">
    <subcellularLocation>
        <location evidence="7">Nucleus</location>
    </subcellularLocation>
    <subcellularLocation>
        <location evidence="7">Cytoplasm</location>
        <location evidence="7">Cytoskeleton</location>
        <location evidence="7">Microtubule organizing center</location>
        <location evidence="7">Centrosome</location>
    </subcellularLocation>
    <subcellularLocation>
        <location evidence="7">Cytoplasm</location>
        <location evidence="7">Cytoskeleton</location>
        <location evidence="7">Spindle</location>
    </subcellularLocation>
    <subcellularLocation>
        <location evidence="1">Midbody</location>
    </subcellularLocation>
    <text evidence="2">localization at the centrosome starts at the G1/S transition (By similarity). Localized at centrosomes at prophase, spindles at metaphase, and at the midbody during cytokinesis. Localization to the centrosome is required for S phase progression (By similarity).</text>
</comment>
<comment type="induction">
    <text evidence="1">By growth-stimulating agents.</text>
</comment>
<comment type="domain">
    <text evidence="1">The POLO box domains act as phosphopeptide-binding module that recognizes and binds serine-[phosphothreonine/phosphoserine]-(proline/X) motifs. plk1 recognizes and binds docking proteins that are already phosphorylated on these motifs, and then phosphorylates them (By similarity).</text>
</comment>
<comment type="PTM">
    <text evidence="7 9 16">Activated by phosphorylation on Thr-201 during M phase. Phosphorylated by stk10, leading to activation during oocyte maturation.</text>
</comment>
<comment type="PTM">
    <text evidence="1">Ubiquitinated by the anaphase promoting complex/cyclosome (APC/C) in anaphase and following DNA damage, leading to its degradation by the proteasome. Protein levels are down-regulated by proteasomal degradation in anaphase (By similarity).</text>
</comment>
<comment type="similarity">
    <text evidence="4">Belongs to the protein kinase superfamily. Ser/Thr protein kinase family.</text>
</comment>